<evidence type="ECO:0000255" key="1">
    <source>
        <dbReference type="HAMAP-Rule" id="MF_00348"/>
    </source>
</evidence>
<name>RADA_METM6</name>
<sequence length="322" mass="35220">MADVLTELPGVGPSTAEKLIEAGYLDFMKIATSTIGELTDIEGISEKAAAKMIMAARDLCDLGFKSGVELLRQRQSVWRLSTGSKELDTVLAGGLESQSVTEFAGMYGSGKTQIMHQSCVNLQIAGKIYADLEGVVEEELENPKAVYIDTEGTFRPERVVQMAEGLGIDGQLVLDNTFVARAYNSDMQMLFAEKIEDLIKSGNNIKLVIIDSLTSTFRNEFTGRGKLAERQQKLGRHMATLNKLADLYNCIVLVTNQVAAKPDAFFGVAEQAIGGHVVGHAATFRFFLRKSKGDKRVAKLYDSPHLPDSEAVFRITEKGIMD</sequence>
<comment type="function">
    <text evidence="1">Involved in DNA repair and in homologous recombination. Binds and assemble on single-stranded DNA to form a nucleoprotein filament. Hydrolyzes ATP in a ssDNA-dependent manner and promotes DNA strand exchange between homologous DNA molecules.</text>
</comment>
<comment type="similarity">
    <text evidence="1">Belongs to the eukaryotic RecA-like protein family.</text>
</comment>
<gene>
    <name evidence="1" type="primary">radA</name>
    <name type="ordered locus">MmarC6_1450</name>
</gene>
<protein>
    <recommendedName>
        <fullName evidence="1">DNA repair and recombination protein RadA</fullName>
    </recommendedName>
</protein>
<proteinExistence type="inferred from homology"/>
<keyword id="KW-0067">ATP-binding</keyword>
<keyword id="KW-0227">DNA damage</keyword>
<keyword id="KW-0233">DNA recombination</keyword>
<keyword id="KW-0238">DNA-binding</keyword>
<keyword id="KW-0547">Nucleotide-binding</keyword>
<dbReference type="EMBL" id="CP000867">
    <property type="protein sequence ID" value="ABX02263.1"/>
    <property type="molecule type" value="Genomic_DNA"/>
</dbReference>
<dbReference type="SMR" id="A9AA90"/>
<dbReference type="STRING" id="444158.MmarC6_1450"/>
<dbReference type="KEGG" id="mmx:MmarC6_1450"/>
<dbReference type="eggNOG" id="arCOG00415">
    <property type="taxonomic scope" value="Archaea"/>
</dbReference>
<dbReference type="HOGENOM" id="CLU_041732_0_0_2"/>
<dbReference type="OrthoDB" id="31129at2157"/>
<dbReference type="PhylomeDB" id="A9AA90"/>
<dbReference type="GO" id="GO:0005524">
    <property type="term" value="F:ATP binding"/>
    <property type="evidence" value="ECO:0007669"/>
    <property type="project" value="UniProtKB-UniRule"/>
</dbReference>
<dbReference type="GO" id="GO:0016887">
    <property type="term" value="F:ATP hydrolysis activity"/>
    <property type="evidence" value="ECO:0007669"/>
    <property type="project" value="InterPro"/>
</dbReference>
<dbReference type="GO" id="GO:0140664">
    <property type="term" value="F:ATP-dependent DNA damage sensor activity"/>
    <property type="evidence" value="ECO:0007669"/>
    <property type="project" value="InterPro"/>
</dbReference>
<dbReference type="GO" id="GO:0003684">
    <property type="term" value="F:damaged DNA binding"/>
    <property type="evidence" value="ECO:0007669"/>
    <property type="project" value="UniProtKB-UniRule"/>
</dbReference>
<dbReference type="GO" id="GO:0006310">
    <property type="term" value="P:DNA recombination"/>
    <property type="evidence" value="ECO:0007669"/>
    <property type="project" value="UniProtKB-UniRule"/>
</dbReference>
<dbReference type="GO" id="GO:0006281">
    <property type="term" value="P:DNA repair"/>
    <property type="evidence" value="ECO:0007669"/>
    <property type="project" value="UniProtKB-UniRule"/>
</dbReference>
<dbReference type="CDD" id="cd19515">
    <property type="entry name" value="archRadA"/>
    <property type="match status" value="1"/>
</dbReference>
<dbReference type="FunFam" id="3.40.50.300:FF:002052">
    <property type="entry name" value="DNA repair protein RAD51 homolog"/>
    <property type="match status" value="1"/>
</dbReference>
<dbReference type="Gene3D" id="1.10.150.20">
    <property type="entry name" value="5' to 3' exonuclease, C-terminal subdomain"/>
    <property type="match status" value="1"/>
</dbReference>
<dbReference type="Gene3D" id="3.40.50.300">
    <property type="entry name" value="P-loop containing nucleotide triphosphate hydrolases"/>
    <property type="match status" value="1"/>
</dbReference>
<dbReference type="HAMAP" id="MF_00348">
    <property type="entry name" value="RadA_arch"/>
    <property type="match status" value="1"/>
</dbReference>
<dbReference type="InterPro" id="IPR003593">
    <property type="entry name" value="AAA+_ATPase"/>
</dbReference>
<dbReference type="InterPro" id="IPR013632">
    <property type="entry name" value="DNA_recomb/repair_Rad51_C"/>
</dbReference>
<dbReference type="InterPro" id="IPR011938">
    <property type="entry name" value="DNA_recomb/repair_RadA"/>
</dbReference>
<dbReference type="InterPro" id="IPR016467">
    <property type="entry name" value="DNA_recomb/repair_RecA-like"/>
</dbReference>
<dbReference type="InterPro" id="IPR010995">
    <property type="entry name" value="DNA_repair_Rad51/TF_NusA_a-hlx"/>
</dbReference>
<dbReference type="InterPro" id="IPR003583">
    <property type="entry name" value="Hlx-hairpin-Hlx_DNA-bd_motif"/>
</dbReference>
<dbReference type="InterPro" id="IPR027417">
    <property type="entry name" value="P-loop_NTPase"/>
</dbReference>
<dbReference type="InterPro" id="IPR020588">
    <property type="entry name" value="RecA_ATP-bd"/>
</dbReference>
<dbReference type="InterPro" id="IPR020587">
    <property type="entry name" value="RecA_monomer-monomer_interface"/>
</dbReference>
<dbReference type="NCBIfam" id="NF003301">
    <property type="entry name" value="PRK04301.1"/>
    <property type="match status" value="1"/>
</dbReference>
<dbReference type="NCBIfam" id="TIGR02236">
    <property type="entry name" value="recomb_radA"/>
    <property type="match status" value="1"/>
</dbReference>
<dbReference type="PANTHER" id="PTHR22942:SF30">
    <property type="entry name" value="MEIOTIC RECOMBINATION PROTEIN DMC1_LIM15 HOMOLOG"/>
    <property type="match status" value="1"/>
</dbReference>
<dbReference type="PANTHER" id="PTHR22942">
    <property type="entry name" value="RECA/RAD51/RADA DNA STRAND-PAIRING FAMILY MEMBER"/>
    <property type="match status" value="1"/>
</dbReference>
<dbReference type="Pfam" id="PF14520">
    <property type="entry name" value="HHH_5"/>
    <property type="match status" value="1"/>
</dbReference>
<dbReference type="Pfam" id="PF08423">
    <property type="entry name" value="Rad51"/>
    <property type="match status" value="1"/>
</dbReference>
<dbReference type="PIRSF" id="PIRSF005856">
    <property type="entry name" value="Rad51"/>
    <property type="match status" value="1"/>
</dbReference>
<dbReference type="SMART" id="SM00382">
    <property type="entry name" value="AAA"/>
    <property type="match status" value="1"/>
</dbReference>
<dbReference type="SMART" id="SM00278">
    <property type="entry name" value="HhH1"/>
    <property type="match status" value="2"/>
</dbReference>
<dbReference type="SUPFAM" id="SSF52540">
    <property type="entry name" value="P-loop containing nucleoside triphosphate hydrolases"/>
    <property type="match status" value="1"/>
</dbReference>
<dbReference type="SUPFAM" id="SSF47794">
    <property type="entry name" value="Rad51 N-terminal domain-like"/>
    <property type="match status" value="1"/>
</dbReference>
<dbReference type="PROSITE" id="PS50162">
    <property type="entry name" value="RECA_2"/>
    <property type="match status" value="1"/>
</dbReference>
<dbReference type="PROSITE" id="PS50163">
    <property type="entry name" value="RECA_3"/>
    <property type="match status" value="1"/>
</dbReference>
<feature type="chain" id="PRO_1000120511" description="DNA repair and recombination protein RadA">
    <location>
        <begin position="1"/>
        <end position="322"/>
    </location>
</feature>
<feature type="binding site" evidence="1">
    <location>
        <begin position="105"/>
        <end position="112"/>
    </location>
    <ligand>
        <name>ATP</name>
        <dbReference type="ChEBI" id="CHEBI:30616"/>
    </ligand>
</feature>
<accession>A9AA90</accession>
<reference key="1">
    <citation type="submission" date="2007-10" db="EMBL/GenBank/DDBJ databases">
        <title>Complete sequence of Methanococcus maripaludis C6.</title>
        <authorList>
            <consortium name="US DOE Joint Genome Institute"/>
            <person name="Copeland A."/>
            <person name="Lucas S."/>
            <person name="Lapidus A."/>
            <person name="Barry K."/>
            <person name="Glavina del Rio T."/>
            <person name="Dalin E."/>
            <person name="Tice H."/>
            <person name="Pitluck S."/>
            <person name="Clum A."/>
            <person name="Schmutz J."/>
            <person name="Larimer F."/>
            <person name="Land M."/>
            <person name="Hauser L."/>
            <person name="Kyrpides N."/>
            <person name="Mikhailova N."/>
            <person name="Sieprawska-Lupa M."/>
            <person name="Whitman W.B."/>
            <person name="Richardson P."/>
        </authorList>
    </citation>
    <scope>NUCLEOTIDE SEQUENCE [LARGE SCALE GENOMIC DNA]</scope>
    <source>
        <strain>C6 / ATCC BAA-1332</strain>
    </source>
</reference>
<organism>
    <name type="scientific">Methanococcus maripaludis (strain C6 / ATCC BAA-1332)</name>
    <dbReference type="NCBI Taxonomy" id="444158"/>
    <lineage>
        <taxon>Archaea</taxon>
        <taxon>Methanobacteriati</taxon>
        <taxon>Methanobacteriota</taxon>
        <taxon>Methanomada group</taxon>
        <taxon>Methanococci</taxon>
        <taxon>Methanococcales</taxon>
        <taxon>Methanococcaceae</taxon>
        <taxon>Methanococcus</taxon>
    </lineage>
</organism>